<keyword id="KW-0227">DNA damage</keyword>
<keyword id="KW-0234">DNA repair</keyword>
<organism>
    <name type="scientific">Yersinia pestis bv. Antiqua (strain Antiqua)</name>
    <dbReference type="NCBI Taxonomy" id="360102"/>
    <lineage>
        <taxon>Bacteria</taxon>
        <taxon>Pseudomonadati</taxon>
        <taxon>Pseudomonadota</taxon>
        <taxon>Gammaproteobacteria</taxon>
        <taxon>Enterobacterales</taxon>
        <taxon>Yersiniaceae</taxon>
        <taxon>Yersinia</taxon>
    </lineage>
</organism>
<protein>
    <recommendedName>
        <fullName evidence="1">DNA mismatch repair protein MutL</fullName>
    </recommendedName>
</protein>
<reference key="1">
    <citation type="journal article" date="2006" name="J. Bacteriol.">
        <title>Complete genome sequence of Yersinia pestis strains Antiqua and Nepal516: evidence of gene reduction in an emerging pathogen.</title>
        <authorList>
            <person name="Chain P.S.G."/>
            <person name="Hu P."/>
            <person name="Malfatti S.A."/>
            <person name="Radnedge L."/>
            <person name="Larimer F."/>
            <person name="Vergez L.M."/>
            <person name="Worsham P."/>
            <person name="Chu M.C."/>
            <person name="Andersen G.L."/>
        </authorList>
    </citation>
    <scope>NUCLEOTIDE SEQUENCE [LARGE SCALE GENOMIC DNA]</scope>
    <source>
        <strain>Antiqua</strain>
    </source>
</reference>
<feature type="chain" id="PRO_1000010106" description="DNA mismatch repair protein MutL">
    <location>
        <begin position="1"/>
        <end position="635"/>
    </location>
</feature>
<feature type="region of interest" description="Disordered" evidence="2">
    <location>
        <begin position="359"/>
        <end position="399"/>
    </location>
</feature>
<feature type="compositionally biased region" description="Low complexity" evidence="2">
    <location>
        <begin position="364"/>
        <end position="377"/>
    </location>
</feature>
<feature type="compositionally biased region" description="Basic and acidic residues" evidence="2">
    <location>
        <begin position="378"/>
        <end position="399"/>
    </location>
</feature>
<gene>
    <name evidence="1" type="primary">mutL</name>
    <name type="ordered locus">YPA_3913</name>
</gene>
<dbReference type="EMBL" id="CP000308">
    <property type="protein sequence ID" value="ABG15874.1"/>
    <property type="molecule type" value="Genomic_DNA"/>
</dbReference>
<dbReference type="RefSeq" id="WP_002209148.1">
    <property type="nucleotide sequence ID" value="NZ_CP009906.1"/>
</dbReference>
<dbReference type="SMR" id="Q1C0Z8"/>
<dbReference type="GeneID" id="57974236"/>
<dbReference type="KEGG" id="ypa:YPA_3913"/>
<dbReference type="Proteomes" id="UP000001971">
    <property type="component" value="Chromosome"/>
</dbReference>
<dbReference type="GO" id="GO:0032300">
    <property type="term" value="C:mismatch repair complex"/>
    <property type="evidence" value="ECO:0007669"/>
    <property type="project" value="InterPro"/>
</dbReference>
<dbReference type="GO" id="GO:0005524">
    <property type="term" value="F:ATP binding"/>
    <property type="evidence" value="ECO:0007669"/>
    <property type="project" value="InterPro"/>
</dbReference>
<dbReference type="GO" id="GO:0016887">
    <property type="term" value="F:ATP hydrolysis activity"/>
    <property type="evidence" value="ECO:0007669"/>
    <property type="project" value="InterPro"/>
</dbReference>
<dbReference type="GO" id="GO:0140664">
    <property type="term" value="F:ATP-dependent DNA damage sensor activity"/>
    <property type="evidence" value="ECO:0007669"/>
    <property type="project" value="InterPro"/>
</dbReference>
<dbReference type="GO" id="GO:0030983">
    <property type="term" value="F:mismatched DNA binding"/>
    <property type="evidence" value="ECO:0007669"/>
    <property type="project" value="InterPro"/>
</dbReference>
<dbReference type="GO" id="GO:0006298">
    <property type="term" value="P:mismatch repair"/>
    <property type="evidence" value="ECO:0007669"/>
    <property type="project" value="UniProtKB-UniRule"/>
</dbReference>
<dbReference type="CDD" id="cd16926">
    <property type="entry name" value="HATPase_MutL-MLH-PMS-like"/>
    <property type="match status" value="1"/>
</dbReference>
<dbReference type="CDD" id="cd03482">
    <property type="entry name" value="MutL_Trans_MutL"/>
    <property type="match status" value="1"/>
</dbReference>
<dbReference type="FunFam" id="3.30.230.10:FF:000013">
    <property type="entry name" value="DNA mismatch repair endonuclease MutL"/>
    <property type="match status" value="1"/>
</dbReference>
<dbReference type="FunFam" id="3.30.565.10:FF:000003">
    <property type="entry name" value="DNA mismatch repair endonuclease MutL"/>
    <property type="match status" value="1"/>
</dbReference>
<dbReference type="FunFam" id="3.30.1370.100:FF:000002">
    <property type="entry name" value="DNA mismatch repair protein MutL"/>
    <property type="match status" value="1"/>
</dbReference>
<dbReference type="Gene3D" id="3.30.230.10">
    <property type="match status" value="1"/>
</dbReference>
<dbReference type="Gene3D" id="3.30.565.10">
    <property type="entry name" value="Histidine kinase-like ATPase, C-terminal domain"/>
    <property type="match status" value="1"/>
</dbReference>
<dbReference type="Gene3D" id="3.30.1540.20">
    <property type="entry name" value="MutL, C-terminal domain, dimerisation subdomain"/>
    <property type="match status" value="1"/>
</dbReference>
<dbReference type="Gene3D" id="3.30.1370.100">
    <property type="entry name" value="MutL, C-terminal domain, regulatory subdomain"/>
    <property type="match status" value="1"/>
</dbReference>
<dbReference type="HAMAP" id="MF_00149">
    <property type="entry name" value="DNA_mis_repair"/>
    <property type="match status" value="1"/>
</dbReference>
<dbReference type="InterPro" id="IPR014762">
    <property type="entry name" value="DNA_mismatch_repair_CS"/>
</dbReference>
<dbReference type="InterPro" id="IPR020667">
    <property type="entry name" value="DNA_mismatch_repair_MutL"/>
</dbReference>
<dbReference type="InterPro" id="IPR013507">
    <property type="entry name" value="DNA_mismatch_S5_2-like"/>
</dbReference>
<dbReference type="InterPro" id="IPR036890">
    <property type="entry name" value="HATPase_C_sf"/>
</dbReference>
<dbReference type="InterPro" id="IPR002099">
    <property type="entry name" value="MutL/Mlh/PMS"/>
</dbReference>
<dbReference type="InterPro" id="IPR038973">
    <property type="entry name" value="MutL/Mlh/Pms-like"/>
</dbReference>
<dbReference type="InterPro" id="IPR014790">
    <property type="entry name" value="MutL_C"/>
</dbReference>
<dbReference type="InterPro" id="IPR042120">
    <property type="entry name" value="MutL_C_dimsub"/>
</dbReference>
<dbReference type="InterPro" id="IPR042121">
    <property type="entry name" value="MutL_C_regsub"/>
</dbReference>
<dbReference type="InterPro" id="IPR037198">
    <property type="entry name" value="MutL_C_sf"/>
</dbReference>
<dbReference type="InterPro" id="IPR020568">
    <property type="entry name" value="Ribosomal_Su5_D2-typ_SF"/>
</dbReference>
<dbReference type="InterPro" id="IPR014721">
    <property type="entry name" value="Ribsml_uS5_D2-typ_fold_subgr"/>
</dbReference>
<dbReference type="NCBIfam" id="TIGR00585">
    <property type="entry name" value="mutl"/>
    <property type="match status" value="1"/>
</dbReference>
<dbReference type="NCBIfam" id="NF000948">
    <property type="entry name" value="PRK00095.1-1"/>
    <property type="match status" value="1"/>
</dbReference>
<dbReference type="PANTHER" id="PTHR10073">
    <property type="entry name" value="DNA MISMATCH REPAIR PROTEIN MLH, PMS, MUTL"/>
    <property type="match status" value="1"/>
</dbReference>
<dbReference type="PANTHER" id="PTHR10073:SF12">
    <property type="entry name" value="DNA MISMATCH REPAIR PROTEIN MLH1"/>
    <property type="match status" value="1"/>
</dbReference>
<dbReference type="Pfam" id="PF01119">
    <property type="entry name" value="DNA_mis_repair"/>
    <property type="match status" value="1"/>
</dbReference>
<dbReference type="Pfam" id="PF13589">
    <property type="entry name" value="HATPase_c_3"/>
    <property type="match status" value="1"/>
</dbReference>
<dbReference type="Pfam" id="PF08676">
    <property type="entry name" value="MutL_C"/>
    <property type="match status" value="1"/>
</dbReference>
<dbReference type="SMART" id="SM01340">
    <property type="entry name" value="DNA_mis_repair"/>
    <property type="match status" value="1"/>
</dbReference>
<dbReference type="SMART" id="SM00853">
    <property type="entry name" value="MutL_C"/>
    <property type="match status" value="1"/>
</dbReference>
<dbReference type="SUPFAM" id="SSF55874">
    <property type="entry name" value="ATPase domain of HSP90 chaperone/DNA topoisomerase II/histidine kinase"/>
    <property type="match status" value="1"/>
</dbReference>
<dbReference type="SUPFAM" id="SSF118116">
    <property type="entry name" value="DNA mismatch repair protein MutL"/>
    <property type="match status" value="1"/>
</dbReference>
<dbReference type="SUPFAM" id="SSF54211">
    <property type="entry name" value="Ribosomal protein S5 domain 2-like"/>
    <property type="match status" value="1"/>
</dbReference>
<dbReference type="PROSITE" id="PS00058">
    <property type="entry name" value="DNA_MISMATCH_REPAIR_1"/>
    <property type="match status" value="1"/>
</dbReference>
<accession>Q1C0Z8</accession>
<name>MUTL_YERPA</name>
<evidence type="ECO:0000255" key="1">
    <source>
        <dbReference type="HAMAP-Rule" id="MF_00149"/>
    </source>
</evidence>
<evidence type="ECO:0000256" key="2">
    <source>
        <dbReference type="SAM" id="MobiDB-lite"/>
    </source>
</evidence>
<comment type="function">
    <text evidence="1">This protein is involved in the repair of mismatches in DNA. It is required for dam-dependent methyl-directed DNA mismatch repair. May act as a 'molecular matchmaker', a protein that promotes the formation of a stable complex between two or more DNA-binding proteins in an ATP-dependent manner without itself being part of a final effector complex.</text>
</comment>
<comment type="similarity">
    <text evidence="1">Belongs to the DNA mismatch repair MutL/HexB family.</text>
</comment>
<proteinExistence type="inferred from homology"/>
<sequence>MPIQILPPQLANQIAAGEVVERPASVVKELVENSLDAGATRIDIDIERGGAKLIRIRDNGCGISKDDLALALARHATSKISSLEDLEAILSMGFRGEALASISSVSRLILTSRTAEQSEAWQAYAEGRDMAVTIKPAAHPVGSTLEVLDLFYNTPARRKFMRTEKTEFGHIDEVVRRIALARFDVAINLNHNGKLIRQYRAAPDPAQHERRLASICGPAFLQHALAIAWQHGDLNIHGWVADPAASHTLSEMQYCYVNNRMMRDRLINHAIRQAYQDRLNDAQQPAYVLYLDIDPHQVDVNVHPAKHEVRFHQARLVHDFIYQAVTAVLQQTNAPILNISEEGEVDAPRWQQENRVAAGTNKYAQPEAAKSSAAEQAVARERSSARERAAPAYKEDHPYQKQQGELYRQLLQPSAAAKPATSPAAIPASSVSSPSIPVQRITQAEEPLHGDNYSFGRVLTVFPPCYALIEYQGGVALLSLAVAERWLKQAQLSPPEEGLRPQPLLIPLKITLDKNEIAACQNHEKLLITMGIELSVEQGRATLRAVSLPLRQQNLQKLIPELLGYLSQHEEISPDTLATWLARHLGSEHEVWNVSQAIQLLTEVERLCPQLVQSPPAGLLQPIDIKAALATLTHE</sequence>